<name>ARGC_NEIM0</name>
<reference key="1">
    <citation type="journal article" date="2008" name="Genomics">
        <title>Characterization of ST-4821 complex, a unique Neisseria meningitidis clone.</title>
        <authorList>
            <person name="Peng J."/>
            <person name="Yang L."/>
            <person name="Yang F."/>
            <person name="Yang J."/>
            <person name="Yan Y."/>
            <person name="Nie H."/>
            <person name="Zhang X."/>
            <person name="Xiong Z."/>
            <person name="Jiang Y."/>
            <person name="Cheng F."/>
            <person name="Xu X."/>
            <person name="Chen S."/>
            <person name="Sun L."/>
            <person name="Li W."/>
            <person name="Shen Y."/>
            <person name="Shao Z."/>
            <person name="Liang X."/>
            <person name="Xu J."/>
            <person name="Jin Q."/>
        </authorList>
    </citation>
    <scope>NUCLEOTIDE SEQUENCE [LARGE SCALE GENOMIC DNA]</scope>
    <source>
        <strain>053442</strain>
    </source>
</reference>
<keyword id="KW-0028">Amino-acid biosynthesis</keyword>
<keyword id="KW-0055">Arginine biosynthesis</keyword>
<keyword id="KW-0963">Cytoplasm</keyword>
<keyword id="KW-0521">NADP</keyword>
<keyword id="KW-0560">Oxidoreductase</keyword>
<proteinExistence type="inferred from homology"/>
<protein>
    <recommendedName>
        <fullName evidence="1">N-acetyl-gamma-glutamyl-phosphate reductase</fullName>
        <shortName evidence="1">AGPR</shortName>
        <ecNumber evidence="1">1.2.1.38</ecNumber>
    </recommendedName>
    <alternativeName>
        <fullName evidence="1">N-acetyl-glutamate semialdehyde dehydrogenase</fullName>
        <shortName evidence="1">NAGSA dehydrogenase</shortName>
    </alternativeName>
</protein>
<sequence>MSKKIKVGIVGATGYTGVELLRLLAAHPDVEVAAVTSRSEAGTAVADYFPSLRGVYGLAFQTPDEAGLEQCDIVFFATPNGIAMKDAPRLIEQGVRVIDLSADFRIRDIPTWEHWYGMTHAAPDLVSQAVYGLSELNREAVAQARLVANPGCYPTCVSLPLVPLLRQCRLKPGMPLIADCKSGVSGAGRKGNVGSLLCEAGDNFKAYGIAGHRHLPEIRQTIAGLQDGIAEGFVFTPHLAPMIRGMHATVYLHLSDGSNPETVLRDYYRDSLFVDILPAGSTPETRSVRGANLCRISIQQAAQSDVWVVLSVIDNLVKGAAGQAVQNMNIMFGLKETHGLDAIPLLP</sequence>
<gene>
    <name evidence="1" type="primary">argC</name>
    <name type="ordered locus">NMCC_0439</name>
</gene>
<accession>A9M1W9</accession>
<feature type="chain" id="PRO_1000076735" description="N-acetyl-gamma-glutamyl-phosphate reductase">
    <location>
        <begin position="1"/>
        <end position="347"/>
    </location>
</feature>
<feature type="active site" evidence="1">
    <location>
        <position position="152"/>
    </location>
</feature>
<comment type="function">
    <text evidence="1">Catalyzes the NADPH-dependent reduction of N-acetyl-5-glutamyl phosphate to yield N-acetyl-L-glutamate 5-semialdehyde.</text>
</comment>
<comment type="catalytic activity">
    <reaction evidence="1">
        <text>N-acetyl-L-glutamate 5-semialdehyde + phosphate + NADP(+) = N-acetyl-L-glutamyl 5-phosphate + NADPH + H(+)</text>
        <dbReference type="Rhea" id="RHEA:21588"/>
        <dbReference type="ChEBI" id="CHEBI:15378"/>
        <dbReference type="ChEBI" id="CHEBI:29123"/>
        <dbReference type="ChEBI" id="CHEBI:43474"/>
        <dbReference type="ChEBI" id="CHEBI:57783"/>
        <dbReference type="ChEBI" id="CHEBI:57936"/>
        <dbReference type="ChEBI" id="CHEBI:58349"/>
        <dbReference type="EC" id="1.2.1.38"/>
    </reaction>
</comment>
<comment type="pathway">
    <text evidence="1">Amino-acid biosynthesis; L-arginine biosynthesis; N(2)-acetyl-L-ornithine from L-glutamate: step 3/4.</text>
</comment>
<comment type="subcellular location">
    <subcellularLocation>
        <location evidence="1">Cytoplasm</location>
    </subcellularLocation>
</comment>
<comment type="similarity">
    <text evidence="1">Belongs to the NAGSA dehydrogenase family. Type 1 subfamily.</text>
</comment>
<dbReference type="EC" id="1.2.1.38" evidence="1"/>
<dbReference type="EMBL" id="CP000381">
    <property type="protein sequence ID" value="ABX72644.1"/>
    <property type="molecule type" value="Genomic_DNA"/>
</dbReference>
<dbReference type="RefSeq" id="WP_012221322.1">
    <property type="nucleotide sequence ID" value="NC_010120.1"/>
</dbReference>
<dbReference type="SMR" id="A9M1W9"/>
<dbReference type="KEGG" id="nmn:NMCC_0439"/>
<dbReference type="HOGENOM" id="CLU_006384_0_1_4"/>
<dbReference type="UniPathway" id="UPA00068">
    <property type="reaction ID" value="UER00108"/>
</dbReference>
<dbReference type="Proteomes" id="UP000001177">
    <property type="component" value="Chromosome"/>
</dbReference>
<dbReference type="GO" id="GO:0005737">
    <property type="term" value="C:cytoplasm"/>
    <property type="evidence" value="ECO:0007669"/>
    <property type="project" value="UniProtKB-SubCell"/>
</dbReference>
<dbReference type="GO" id="GO:0003942">
    <property type="term" value="F:N-acetyl-gamma-glutamyl-phosphate reductase activity"/>
    <property type="evidence" value="ECO:0007669"/>
    <property type="project" value="UniProtKB-UniRule"/>
</dbReference>
<dbReference type="GO" id="GO:0051287">
    <property type="term" value="F:NAD binding"/>
    <property type="evidence" value="ECO:0007669"/>
    <property type="project" value="InterPro"/>
</dbReference>
<dbReference type="GO" id="GO:0070401">
    <property type="term" value="F:NADP+ binding"/>
    <property type="evidence" value="ECO:0007669"/>
    <property type="project" value="InterPro"/>
</dbReference>
<dbReference type="GO" id="GO:0006526">
    <property type="term" value="P:L-arginine biosynthetic process"/>
    <property type="evidence" value="ECO:0007669"/>
    <property type="project" value="UniProtKB-UniRule"/>
</dbReference>
<dbReference type="CDD" id="cd23934">
    <property type="entry name" value="AGPR_1_C"/>
    <property type="match status" value="1"/>
</dbReference>
<dbReference type="CDD" id="cd17895">
    <property type="entry name" value="AGPR_1_N"/>
    <property type="match status" value="1"/>
</dbReference>
<dbReference type="Gene3D" id="3.30.360.10">
    <property type="entry name" value="Dihydrodipicolinate Reductase, domain 2"/>
    <property type="match status" value="1"/>
</dbReference>
<dbReference type="Gene3D" id="3.40.50.720">
    <property type="entry name" value="NAD(P)-binding Rossmann-like Domain"/>
    <property type="match status" value="1"/>
</dbReference>
<dbReference type="HAMAP" id="MF_00150">
    <property type="entry name" value="ArgC_type1"/>
    <property type="match status" value="1"/>
</dbReference>
<dbReference type="InterPro" id="IPR023013">
    <property type="entry name" value="AGPR_AS"/>
</dbReference>
<dbReference type="InterPro" id="IPR000706">
    <property type="entry name" value="AGPR_type-1"/>
</dbReference>
<dbReference type="InterPro" id="IPR036291">
    <property type="entry name" value="NAD(P)-bd_dom_sf"/>
</dbReference>
<dbReference type="InterPro" id="IPR050085">
    <property type="entry name" value="NAGSA_dehydrogenase"/>
</dbReference>
<dbReference type="InterPro" id="IPR000534">
    <property type="entry name" value="Semialdehyde_DH_NAD-bd"/>
</dbReference>
<dbReference type="NCBIfam" id="TIGR01850">
    <property type="entry name" value="argC"/>
    <property type="match status" value="1"/>
</dbReference>
<dbReference type="PANTHER" id="PTHR32338:SF10">
    <property type="entry name" value="N-ACETYL-GAMMA-GLUTAMYL-PHOSPHATE REDUCTASE, CHLOROPLASTIC-RELATED"/>
    <property type="match status" value="1"/>
</dbReference>
<dbReference type="PANTHER" id="PTHR32338">
    <property type="entry name" value="N-ACETYL-GAMMA-GLUTAMYL-PHOSPHATE REDUCTASE, CHLOROPLASTIC-RELATED-RELATED"/>
    <property type="match status" value="1"/>
</dbReference>
<dbReference type="Pfam" id="PF01118">
    <property type="entry name" value="Semialdhyde_dh"/>
    <property type="match status" value="1"/>
</dbReference>
<dbReference type="Pfam" id="PF22698">
    <property type="entry name" value="Semialdhyde_dhC_1"/>
    <property type="match status" value="1"/>
</dbReference>
<dbReference type="SMART" id="SM00859">
    <property type="entry name" value="Semialdhyde_dh"/>
    <property type="match status" value="1"/>
</dbReference>
<dbReference type="SUPFAM" id="SSF55347">
    <property type="entry name" value="Glyceraldehyde-3-phosphate dehydrogenase-like, C-terminal domain"/>
    <property type="match status" value="1"/>
</dbReference>
<dbReference type="SUPFAM" id="SSF51735">
    <property type="entry name" value="NAD(P)-binding Rossmann-fold domains"/>
    <property type="match status" value="1"/>
</dbReference>
<dbReference type="PROSITE" id="PS01224">
    <property type="entry name" value="ARGC"/>
    <property type="match status" value="1"/>
</dbReference>
<organism>
    <name type="scientific">Neisseria meningitidis serogroup C (strain 053442)</name>
    <dbReference type="NCBI Taxonomy" id="374833"/>
    <lineage>
        <taxon>Bacteria</taxon>
        <taxon>Pseudomonadati</taxon>
        <taxon>Pseudomonadota</taxon>
        <taxon>Betaproteobacteria</taxon>
        <taxon>Neisseriales</taxon>
        <taxon>Neisseriaceae</taxon>
        <taxon>Neisseria</taxon>
    </lineage>
</organism>
<evidence type="ECO:0000255" key="1">
    <source>
        <dbReference type="HAMAP-Rule" id="MF_00150"/>
    </source>
</evidence>